<keyword id="KW-0414">Isoprene biosynthesis</keyword>
<keyword id="KW-0456">Lyase</keyword>
<keyword id="KW-0479">Metal-binding</keyword>
<keyword id="KW-1185">Reference proteome</keyword>
<dbReference type="EC" id="4.6.1.12" evidence="1"/>
<dbReference type="EMBL" id="CU468135">
    <property type="protein sequence ID" value="CAO97746.1"/>
    <property type="molecule type" value="Genomic_DNA"/>
</dbReference>
<dbReference type="RefSeq" id="WP_004155832.1">
    <property type="nucleotide sequence ID" value="NC_010694.1"/>
</dbReference>
<dbReference type="SMR" id="B2VFZ6"/>
<dbReference type="STRING" id="465817.ETA_27000"/>
<dbReference type="GeneID" id="97605084"/>
<dbReference type="KEGG" id="eta:ETA_27000"/>
<dbReference type="eggNOG" id="COG0245">
    <property type="taxonomic scope" value="Bacteria"/>
</dbReference>
<dbReference type="HOGENOM" id="CLU_084630_2_0_6"/>
<dbReference type="OrthoDB" id="9804336at2"/>
<dbReference type="UniPathway" id="UPA00056">
    <property type="reaction ID" value="UER00095"/>
</dbReference>
<dbReference type="Proteomes" id="UP000001726">
    <property type="component" value="Chromosome"/>
</dbReference>
<dbReference type="GO" id="GO:0008685">
    <property type="term" value="F:2-C-methyl-D-erythritol 2,4-cyclodiphosphate synthase activity"/>
    <property type="evidence" value="ECO:0007669"/>
    <property type="project" value="UniProtKB-UniRule"/>
</dbReference>
<dbReference type="GO" id="GO:0046872">
    <property type="term" value="F:metal ion binding"/>
    <property type="evidence" value="ECO:0007669"/>
    <property type="project" value="UniProtKB-KW"/>
</dbReference>
<dbReference type="GO" id="GO:0019288">
    <property type="term" value="P:isopentenyl diphosphate biosynthetic process, methylerythritol 4-phosphate pathway"/>
    <property type="evidence" value="ECO:0007669"/>
    <property type="project" value="UniProtKB-UniRule"/>
</dbReference>
<dbReference type="GO" id="GO:0016114">
    <property type="term" value="P:terpenoid biosynthetic process"/>
    <property type="evidence" value="ECO:0007669"/>
    <property type="project" value="InterPro"/>
</dbReference>
<dbReference type="CDD" id="cd00554">
    <property type="entry name" value="MECDP_synthase"/>
    <property type="match status" value="1"/>
</dbReference>
<dbReference type="FunFam" id="3.30.1330.50:FF:000001">
    <property type="entry name" value="2-C-methyl-D-erythritol 2,4-cyclodiphosphate synthase"/>
    <property type="match status" value="1"/>
</dbReference>
<dbReference type="Gene3D" id="3.30.1330.50">
    <property type="entry name" value="2-C-methyl-D-erythritol 2,4-cyclodiphosphate synthase"/>
    <property type="match status" value="1"/>
</dbReference>
<dbReference type="HAMAP" id="MF_00107">
    <property type="entry name" value="IspF"/>
    <property type="match status" value="1"/>
</dbReference>
<dbReference type="InterPro" id="IPR003526">
    <property type="entry name" value="MECDP_synthase"/>
</dbReference>
<dbReference type="InterPro" id="IPR020555">
    <property type="entry name" value="MECDP_synthase_CS"/>
</dbReference>
<dbReference type="InterPro" id="IPR036571">
    <property type="entry name" value="MECDP_synthase_sf"/>
</dbReference>
<dbReference type="NCBIfam" id="TIGR00151">
    <property type="entry name" value="ispF"/>
    <property type="match status" value="1"/>
</dbReference>
<dbReference type="PANTHER" id="PTHR43181">
    <property type="entry name" value="2-C-METHYL-D-ERYTHRITOL 2,4-CYCLODIPHOSPHATE SYNTHASE, CHLOROPLASTIC"/>
    <property type="match status" value="1"/>
</dbReference>
<dbReference type="PANTHER" id="PTHR43181:SF1">
    <property type="entry name" value="2-C-METHYL-D-ERYTHRITOL 2,4-CYCLODIPHOSPHATE SYNTHASE, CHLOROPLASTIC"/>
    <property type="match status" value="1"/>
</dbReference>
<dbReference type="Pfam" id="PF02542">
    <property type="entry name" value="YgbB"/>
    <property type="match status" value="1"/>
</dbReference>
<dbReference type="SUPFAM" id="SSF69765">
    <property type="entry name" value="IpsF-like"/>
    <property type="match status" value="1"/>
</dbReference>
<dbReference type="PROSITE" id="PS01350">
    <property type="entry name" value="ISPF"/>
    <property type="match status" value="1"/>
</dbReference>
<evidence type="ECO:0000255" key="1">
    <source>
        <dbReference type="HAMAP-Rule" id="MF_00107"/>
    </source>
</evidence>
<accession>B2VFZ6</accession>
<feature type="chain" id="PRO_1000094262" description="2-C-methyl-D-erythritol 2,4-cyclodiphosphate synthase">
    <location>
        <begin position="1"/>
        <end position="157"/>
    </location>
</feature>
<feature type="binding site" evidence="1">
    <location>
        <begin position="8"/>
        <end position="10"/>
    </location>
    <ligand>
        <name>4-CDP-2-C-methyl-D-erythritol 2-phosphate</name>
        <dbReference type="ChEBI" id="CHEBI:57919"/>
    </ligand>
</feature>
<feature type="binding site" evidence="1">
    <location>
        <position position="8"/>
    </location>
    <ligand>
        <name>a divalent metal cation</name>
        <dbReference type="ChEBI" id="CHEBI:60240"/>
    </ligand>
</feature>
<feature type="binding site" evidence="1">
    <location>
        <position position="10"/>
    </location>
    <ligand>
        <name>a divalent metal cation</name>
        <dbReference type="ChEBI" id="CHEBI:60240"/>
    </ligand>
</feature>
<feature type="binding site" evidence="1">
    <location>
        <begin position="34"/>
        <end position="35"/>
    </location>
    <ligand>
        <name>4-CDP-2-C-methyl-D-erythritol 2-phosphate</name>
        <dbReference type="ChEBI" id="CHEBI:57919"/>
    </ligand>
</feature>
<feature type="binding site" evidence="1">
    <location>
        <position position="42"/>
    </location>
    <ligand>
        <name>a divalent metal cation</name>
        <dbReference type="ChEBI" id="CHEBI:60240"/>
    </ligand>
</feature>
<feature type="binding site" evidence="1">
    <location>
        <begin position="56"/>
        <end position="58"/>
    </location>
    <ligand>
        <name>4-CDP-2-C-methyl-D-erythritol 2-phosphate</name>
        <dbReference type="ChEBI" id="CHEBI:57919"/>
    </ligand>
</feature>
<feature type="binding site" evidence="1">
    <location>
        <begin position="61"/>
        <end position="65"/>
    </location>
    <ligand>
        <name>4-CDP-2-C-methyl-D-erythritol 2-phosphate</name>
        <dbReference type="ChEBI" id="CHEBI:57919"/>
    </ligand>
</feature>
<feature type="binding site" evidence="1">
    <location>
        <begin position="100"/>
        <end position="106"/>
    </location>
    <ligand>
        <name>4-CDP-2-C-methyl-D-erythritol 2-phosphate</name>
        <dbReference type="ChEBI" id="CHEBI:57919"/>
    </ligand>
</feature>
<feature type="binding site" evidence="1">
    <location>
        <begin position="132"/>
        <end position="135"/>
    </location>
    <ligand>
        <name>4-CDP-2-C-methyl-D-erythritol 2-phosphate</name>
        <dbReference type="ChEBI" id="CHEBI:57919"/>
    </ligand>
</feature>
<feature type="binding site" evidence="1">
    <location>
        <position position="139"/>
    </location>
    <ligand>
        <name>4-CDP-2-C-methyl-D-erythritol 2-phosphate</name>
        <dbReference type="ChEBI" id="CHEBI:57919"/>
    </ligand>
</feature>
<feature type="binding site" evidence="1">
    <location>
        <position position="142"/>
    </location>
    <ligand>
        <name>4-CDP-2-C-methyl-D-erythritol 2-phosphate</name>
        <dbReference type="ChEBI" id="CHEBI:57919"/>
    </ligand>
</feature>
<feature type="site" description="Transition state stabilizer" evidence="1">
    <location>
        <position position="34"/>
    </location>
</feature>
<feature type="site" description="Transition state stabilizer" evidence="1">
    <location>
        <position position="133"/>
    </location>
</feature>
<protein>
    <recommendedName>
        <fullName evidence="1">2-C-methyl-D-erythritol 2,4-cyclodiphosphate synthase</fullName>
        <shortName evidence="1">MECDP-synthase</shortName>
        <shortName evidence="1">MECPP-synthase</shortName>
        <shortName evidence="1">MECPS</shortName>
        <ecNumber evidence="1">4.6.1.12</ecNumber>
    </recommendedName>
</protein>
<proteinExistence type="inferred from homology"/>
<comment type="function">
    <text evidence="1">Involved in the biosynthesis of isopentenyl diphosphate (IPP) and dimethylallyl diphosphate (DMAPP), two major building blocks of isoprenoid compounds. Catalyzes the conversion of 4-diphosphocytidyl-2-C-methyl-D-erythritol 2-phosphate (CDP-ME2P) to 2-C-methyl-D-erythritol 2,4-cyclodiphosphate (ME-CPP) with a corresponding release of cytidine 5-monophosphate (CMP).</text>
</comment>
<comment type="catalytic activity">
    <reaction evidence="1">
        <text>4-CDP-2-C-methyl-D-erythritol 2-phosphate = 2-C-methyl-D-erythritol 2,4-cyclic diphosphate + CMP</text>
        <dbReference type="Rhea" id="RHEA:23864"/>
        <dbReference type="ChEBI" id="CHEBI:57919"/>
        <dbReference type="ChEBI" id="CHEBI:58483"/>
        <dbReference type="ChEBI" id="CHEBI:60377"/>
        <dbReference type="EC" id="4.6.1.12"/>
    </reaction>
</comment>
<comment type="cofactor">
    <cofactor evidence="1">
        <name>a divalent metal cation</name>
        <dbReference type="ChEBI" id="CHEBI:60240"/>
    </cofactor>
    <text evidence="1">Binds 1 divalent metal cation per subunit.</text>
</comment>
<comment type="pathway">
    <text evidence="1">Isoprenoid biosynthesis; isopentenyl diphosphate biosynthesis via DXP pathway; isopentenyl diphosphate from 1-deoxy-D-xylulose 5-phosphate: step 4/6.</text>
</comment>
<comment type="subunit">
    <text evidence="1">Homotrimer.</text>
</comment>
<comment type="similarity">
    <text evidence="1">Belongs to the IspF family.</text>
</comment>
<name>ISPF_ERWT9</name>
<reference key="1">
    <citation type="journal article" date="2008" name="Environ. Microbiol.">
        <title>The genome of Erwinia tasmaniensis strain Et1/99, a non-pathogenic bacterium in the genus Erwinia.</title>
        <authorList>
            <person name="Kube M."/>
            <person name="Migdoll A.M."/>
            <person name="Mueller I."/>
            <person name="Kuhl H."/>
            <person name="Beck A."/>
            <person name="Reinhardt R."/>
            <person name="Geider K."/>
        </authorList>
    </citation>
    <scope>NUCLEOTIDE SEQUENCE [LARGE SCALE GENOMIC DNA]</scope>
    <source>
        <strain>DSM 17950 / CFBP 7177 / CIP 109463 / NCPPB 4357 / Et1/99</strain>
    </source>
</reference>
<organism>
    <name type="scientific">Erwinia tasmaniensis (strain DSM 17950 / CFBP 7177 / CIP 109463 / NCPPB 4357 / Et1/99)</name>
    <dbReference type="NCBI Taxonomy" id="465817"/>
    <lineage>
        <taxon>Bacteria</taxon>
        <taxon>Pseudomonadati</taxon>
        <taxon>Pseudomonadota</taxon>
        <taxon>Gammaproteobacteria</taxon>
        <taxon>Enterobacterales</taxon>
        <taxon>Erwiniaceae</taxon>
        <taxon>Erwinia</taxon>
    </lineage>
</organism>
<sequence length="157" mass="16619">MRIGHGFDVHAFGGEGPLIIGGVRIPYEKGLLAHSDGDVALHALTDALLGAAALGDIGKLFPDTDEAYKGADSRELLREALRQIAQKGYRVGNVDVTIIAQAPKMLPHAPQMRINIAEDLGIHMDEVNVKATTTEKLGFTGRGEGIACEAVALLIKA</sequence>
<gene>
    <name evidence="1" type="primary">ispF</name>
    <name type="ordered locus">ETA_27000</name>
</gene>